<organism>
    <name type="scientific">Shigella boydii serotype 4 (strain Sb227)</name>
    <dbReference type="NCBI Taxonomy" id="300268"/>
    <lineage>
        <taxon>Bacteria</taxon>
        <taxon>Pseudomonadati</taxon>
        <taxon>Pseudomonadota</taxon>
        <taxon>Gammaproteobacteria</taxon>
        <taxon>Enterobacterales</taxon>
        <taxon>Enterobacteriaceae</taxon>
        <taxon>Shigella</taxon>
    </lineage>
</organism>
<reference key="1">
    <citation type="journal article" date="2005" name="Nucleic Acids Res.">
        <title>Genome dynamics and diversity of Shigella species, the etiologic agents of bacillary dysentery.</title>
        <authorList>
            <person name="Yang F."/>
            <person name="Yang J."/>
            <person name="Zhang X."/>
            <person name="Chen L."/>
            <person name="Jiang Y."/>
            <person name="Yan Y."/>
            <person name="Tang X."/>
            <person name="Wang J."/>
            <person name="Xiong Z."/>
            <person name="Dong J."/>
            <person name="Xue Y."/>
            <person name="Zhu Y."/>
            <person name="Xu X."/>
            <person name="Sun L."/>
            <person name="Chen S."/>
            <person name="Nie H."/>
            <person name="Peng J."/>
            <person name="Xu J."/>
            <person name="Wang Y."/>
            <person name="Yuan Z."/>
            <person name="Wen Y."/>
            <person name="Yao Z."/>
            <person name="Shen Y."/>
            <person name="Qiang B."/>
            <person name="Hou Y."/>
            <person name="Yu J."/>
            <person name="Jin Q."/>
        </authorList>
    </citation>
    <scope>NUCLEOTIDE SEQUENCE [LARGE SCALE GENOMIC DNA]</scope>
    <source>
        <strain>Sb227</strain>
    </source>
</reference>
<gene>
    <name evidence="1" type="primary">acpH</name>
    <name type="ordered locus">SBO_0298</name>
</gene>
<name>ACPH_SHIBS</name>
<keyword id="KW-0275">Fatty acid biosynthesis</keyword>
<keyword id="KW-0276">Fatty acid metabolism</keyword>
<keyword id="KW-0378">Hydrolase</keyword>
<keyword id="KW-0444">Lipid biosynthesis</keyword>
<keyword id="KW-0443">Lipid metabolism</keyword>
<dbReference type="EC" id="3.1.4.14" evidence="1"/>
<dbReference type="EMBL" id="CP000036">
    <property type="protein sequence ID" value="ABB65011.1"/>
    <property type="molecule type" value="Genomic_DNA"/>
</dbReference>
<dbReference type="RefSeq" id="WP_001009876.1">
    <property type="nucleotide sequence ID" value="NC_007613.1"/>
</dbReference>
<dbReference type="SMR" id="Q325J7"/>
<dbReference type="KEGG" id="sbo:SBO_0298"/>
<dbReference type="HOGENOM" id="CLU_099370_1_0_6"/>
<dbReference type="Proteomes" id="UP000007067">
    <property type="component" value="Chromosome"/>
</dbReference>
<dbReference type="GO" id="GO:0008770">
    <property type="term" value="F:[acyl-carrier-protein] phosphodiesterase activity"/>
    <property type="evidence" value="ECO:0007669"/>
    <property type="project" value="UniProtKB-UniRule"/>
</dbReference>
<dbReference type="GO" id="GO:0006633">
    <property type="term" value="P:fatty acid biosynthetic process"/>
    <property type="evidence" value="ECO:0007669"/>
    <property type="project" value="UniProtKB-UniRule"/>
</dbReference>
<dbReference type="HAMAP" id="MF_01950">
    <property type="entry name" value="AcpH"/>
    <property type="match status" value="1"/>
</dbReference>
<dbReference type="InterPro" id="IPR007431">
    <property type="entry name" value="ACP_PD"/>
</dbReference>
<dbReference type="InterPro" id="IPR023491">
    <property type="entry name" value="ACP_phosphodiesterase_gpbac"/>
</dbReference>
<dbReference type="NCBIfam" id="NF007466">
    <property type="entry name" value="PRK10045.1"/>
    <property type="match status" value="1"/>
</dbReference>
<dbReference type="PANTHER" id="PTHR38764">
    <property type="entry name" value="ACYL CARRIER PROTEIN PHOSPHODIESTERASE"/>
    <property type="match status" value="1"/>
</dbReference>
<dbReference type="PANTHER" id="PTHR38764:SF1">
    <property type="entry name" value="ACYL CARRIER PROTEIN PHOSPHODIESTERASE"/>
    <property type="match status" value="1"/>
</dbReference>
<dbReference type="Pfam" id="PF04336">
    <property type="entry name" value="ACP_PD"/>
    <property type="match status" value="1"/>
</dbReference>
<dbReference type="PIRSF" id="PIRSF011489">
    <property type="entry name" value="DUF479"/>
    <property type="match status" value="1"/>
</dbReference>
<proteinExistence type="inferred from homology"/>
<comment type="function">
    <text evidence="1">Converts holo-ACP to apo-ACP by hydrolytic cleavage of the phosphopantetheine prosthetic group from ACP.</text>
</comment>
<comment type="catalytic activity">
    <reaction evidence="1">
        <text>holo-[ACP] + H2O = apo-[ACP] + (R)-4'-phosphopantetheine + H(+)</text>
        <dbReference type="Rhea" id="RHEA:20537"/>
        <dbReference type="Rhea" id="RHEA-COMP:9685"/>
        <dbReference type="Rhea" id="RHEA-COMP:9690"/>
        <dbReference type="ChEBI" id="CHEBI:15377"/>
        <dbReference type="ChEBI" id="CHEBI:15378"/>
        <dbReference type="ChEBI" id="CHEBI:29999"/>
        <dbReference type="ChEBI" id="CHEBI:61723"/>
        <dbReference type="ChEBI" id="CHEBI:64479"/>
        <dbReference type="EC" id="3.1.4.14"/>
    </reaction>
</comment>
<comment type="similarity">
    <text evidence="1">Belongs to the AcpH family.</text>
</comment>
<evidence type="ECO:0000255" key="1">
    <source>
        <dbReference type="HAMAP-Rule" id="MF_01950"/>
    </source>
</evidence>
<sequence>MNFLAHLHLAHLAESSLSGNLLADFVRGNPEESFPPDVVAGIHMHRRIDVLTDNLPEVREAREWFRRETRRVAPITLDVMWDHFLSRHWSQLSPDFPLQEFICYARKQVMTILPDSPPRFINLNNYLWSEQWLVRYRDMDFIQNVLNGMASRRPRLDALRDSWYDLNAHYTALGTRFWQFYPRMMAQASHKAL</sequence>
<protein>
    <recommendedName>
        <fullName evidence="1">Acyl carrier protein phosphodiesterase</fullName>
        <shortName evidence="1">ACP phosphodiesterase</shortName>
        <ecNumber evidence="1">3.1.4.14</ecNumber>
    </recommendedName>
</protein>
<feature type="chain" id="PRO_0000226274" description="Acyl carrier protein phosphodiesterase">
    <location>
        <begin position="1"/>
        <end position="193"/>
    </location>
</feature>
<accession>Q325J7</accession>